<dbReference type="EMBL" id="CP001095">
    <property type="protein sequence ID" value="ACJ53277.1"/>
    <property type="molecule type" value="Genomic_DNA"/>
</dbReference>
<dbReference type="EMBL" id="AP010889">
    <property type="protein sequence ID" value="BAJ69868.1"/>
    <property type="molecule type" value="Genomic_DNA"/>
</dbReference>
<dbReference type="RefSeq" id="WP_008783622.1">
    <property type="nucleotide sequence ID" value="NZ_JDTT01000039.1"/>
</dbReference>
<dbReference type="SMR" id="B7GNC1"/>
<dbReference type="GeneID" id="69578878"/>
<dbReference type="KEGG" id="bln:Blon_2218"/>
<dbReference type="KEGG" id="blon:BLIJ_2291"/>
<dbReference type="PATRIC" id="fig|391904.8.peg.2293"/>
<dbReference type="HOGENOM" id="CLU_055188_4_1_11"/>
<dbReference type="Proteomes" id="UP000001360">
    <property type="component" value="Chromosome"/>
</dbReference>
<dbReference type="GO" id="GO:0022625">
    <property type="term" value="C:cytosolic large ribosomal subunit"/>
    <property type="evidence" value="ECO:0007669"/>
    <property type="project" value="TreeGrafter"/>
</dbReference>
<dbReference type="GO" id="GO:0019843">
    <property type="term" value="F:rRNA binding"/>
    <property type="evidence" value="ECO:0007669"/>
    <property type="project" value="UniProtKB-UniRule"/>
</dbReference>
<dbReference type="GO" id="GO:0003735">
    <property type="term" value="F:structural constituent of ribosome"/>
    <property type="evidence" value="ECO:0007669"/>
    <property type="project" value="InterPro"/>
</dbReference>
<dbReference type="GO" id="GO:0006412">
    <property type="term" value="P:translation"/>
    <property type="evidence" value="ECO:0007669"/>
    <property type="project" value="UniProtKB-UniRule"/>
</dbReference>
<dbReference type="Gene3D" id="3.100.10.10">
    <property type="match status" value="1"/>
</dbReference>
<dbReference type="HAMAP" id="MF_01341">
    <property type="entry name" value="Ribosomal_uL15"/>
    <property type="match status" value="1"/>
</dbReference>
<dbReference type="InterPro" id="IPR030878">
    <property type="entry name" value="Ribosomal_uL15"/>
</dbReference>
<dbReference type="InterPro" id="IPR021131">
    <property type="entry name" value="Ribosomal_uL15/eL18"/>
</dbReference>
<dbReference type="InterPro" id="IPR036227">
    <property type="entry name" value="Ribosomal_uL15/eL18_sf"/>
</dbReference>
<dbReference type="InterPro" id="IPR005749">
    <property type="entry name" value="Ribosomal_uL15_bac-type"/>
</dbReference>
<dbReference type="NCBIfam" id="TIGR01071">
    <property type="entry name" value="rplO_bact"/>
    <property type="match status" value="1"/>
</dbReference>
<dbReference type="PANTHER" id="PTHR12934">
    <property type="entry name" value="50S RIBOSOMAL PROTEIN L15"/>
    <property type="match status" value="1"/>
</dbReference>
<dbReference type="PANTHER" id="PTHR12934:SF11">
    <property type="entry name" value="LARGE RIBOSOMAL SUBUNIT PROTEIN UL15M"/>
    <property type="match status" value="1"/>
</dbReference>
<dbReference type="Pfam" id="PF00828">
    <property type="entry name" value="Ribosomal_L27A"/>
    <property type="match status" value="1"/>
</dbReference>
<dbReference type="SUPFAM" id="SSF52080">
    <property type="entry name" value="Ribosomal proteins L15p and L18e"/>
    <property type="match status" value="1"/>
</dbReference>
<feature type="chain" id="PRO_1000166276" description="Large ribosomal subunit protein uL15">
    <location>
        <begin position="1"/>
        <end position="150"/>
    </location>
</feature>
<feature type="region of interest" description="Disordered" evidence="2">
    <location>
        <begin position="1"/>
        <end position="55"/>
    </location>
</feature>
<feature type="compositionally biased region" description="Basic and acidic residues" evidence="2">
    <location>
        <begin position="8"/>
        <end position="32"/>
    </location>
</feature>
<reference key="1">
    <citation type="journal article" date="2008" name="Proc. Natl. Acad. Sci. U.S.A.">
        <title>The genome sequence of Bifidobacterium longum subsp. infantis reveals adaptations for milk utilization within the infant microbiome.</title>
        <authorList>
            <person name="Sela D.A."/>
            <person name="Chapman J."/>
            <person name="Adeuya A."/>
            <person name="Kim J.H."/>
            <person name="Chen F."/>
            <person name="Whitehead T.R."/>
            <person name="Lapidus A."/>
            <person name="Rokhsar D.S."/>
            <person name="Lebrilla C.B."/>
            <person name="German J.B."/>
            <person name="Price N.P."/>
            <person name="Richardson P.M."/>
            <person name="Mills D.A."/>
        </authorList>
    </citation>
    <scope>NUCLEOTIDE SEQUENCE [LARGE SCALE GENOMIC DNA]</scope>
    <source>
        <strain>ATCC 15697 / DSM 20088 / JCM 1222 / NCTC 11817 / S12</strain>
    </source>
</reference>
<reference key="2">
    <citation type="journal article" date="2011" name="Nature">
        <title>Bifidobacteria can protect from enteropathogenic infection through production of acetate.</title>
        <authorList>
            <person name="Fukuda S."/>
            <person name="Toh H."/>
            <person name="Hase K."/>
            <person name="Oshima K."/>
            <person name="Nakanishi Y."/>
            <person name="Yoshimura K."/>
            <person name="Tobe T."/>
            <person name="Clarke J.M."/>
            <person name="Topping D.L."/>
            <person name="Suzuki T."/>
            <person name="Taylor T.D."/>
            <person name="Itoh K."/>
            <person name="Kikuchi J."/>
            <person name="Morita H."/>
            <person name="Hattori M."/>
            <person name="Ohno H."/>
        </authorList>
    </citation>
    <scope>NUCLEOTIDE SEQUENCE [LARGE SCALE GENOMIC DNA]</scope>
    <source>
        <strain>ATCC 15697 / DSM 20088 / JCM 1222 / NCTC 11817 / S12</strain>
    </source>
</reference>
<evidence type="ECO:0000255" key="1">
    <source>
        <dbReference type="HAMAP-Rule" id="MF_01341"/>
    </source>
</evidence>
<evidence type="ECO:0000256" key="2">
    <source>
        <dbReference type="SAM" id="MobiDB-lite"/>
    </source>
</evidence>
<evidence type="ECO:0000305" key="3"/>
<proteinExistence type="inferred from homology"/>
<sequence>MADNEILQMHDLKPAPGAKKDRTRVGRGEGSKGKTSGRGAKGQTKRNHVRPGFEGGQLPLYMRLPKLRGFKNPFKVEFQVINIARLVELFPEGGEVAVADLIAKGAVRDNAPVKVLGDGETTVAFTLKGVKASASAKSKIEAAGGSVSED</sequence>
<accession>B7GNC1</accession>
<accession>E8MN65</accession>
<protein>
    <recommendedName>
        <fullName evidence="1">Large ribosomal subunit protein uL15</fullName>
    </recommendedName>
    <alternativeName>
        <fullName evidence="3">50S ribosomal protein L15</fullName>
    </alternativeName>
</protein>
<name>RL15_BIFLS</name>
<organism>
    <name type="scientific">Bifidobacterium longum subsp. infantis (strain ATCC 15697 / DSM 20088 / JCM 1222 / NCTC 11817 / S12)</name>
    <dbReference type="NCBI Taxonomy" id="391904"/>
    <lineage>
        <taxon>Bacteria</taxon>
        <taxon>Bacillati</taxon>
        <taxon>Actinomycetota</taxon>
        <taxon>Actinomycetes</taxon>
        <taxon>Bifidobacteriales</taxon>
        <taxon>Bifidobacteriaceae</taxon>
        <taxon>Bifidobacterium</taxon>
    </lineage>
</organism>
<comment type="function">
    <text evidence="1">Binds to the 23S rRNA.</text>
</comment>
<comment type="subunit">
    <text evidence="1">Part of the 50S ribosomal subunit.</text>
</comment>
<comment type="similarity">
    <text evidence="1">Belongs to the universal ribosomal protein uL15 family.</text>
</comment>
<gene>
    <name evidence="1" type="primary">rplO</name>
    <name type="ordered locus">Blon_2218</name>
    <name type="ordered locus">BLIJ_2291</name>
</gene>
<keyword id="KW-0687">Ribonucleoprotein</keyword>
<keyword id="KW-0689">Ribosomal protein</keyword>
<keyword id="KW-0694">RNA-binding</keyword>
<keyword id="KW-0699">rRNA-binding</keyword>